<dbReference type="EC" id="7.1.1.-"/>
<dbReference type="EMBL" id="AE005674">
    <property type="protein sequence ID" value="AAN43872.2"/>
    <property type="molecule type" value="Genomic_DNA"/>
</dbReference>
<dbReference type="EMBL" id="AE014073">
    <property type="protein sequence ID" value="AAP17690.1"/>
    <property type="molecule type" value="Genomic_DNA"/>
</dbReference>
<dbReference type="RefSeq" id="NP_708165.2">
    <property type="nucleotide sequence ID" value="NC_004337.2"/>
</dbReference>
<dbReference type="RefSeq" id="WP_005046953.1">
    <property type="nucleotide sequence ID" value="NZ_WPGW01000084.1"/>
</dbReference>
<dbReference type="SMR" id="Q7UC56"/>
<dbReference type="STRING" id="198214.SF2359"/>
<dbReference type="PaxDb" id="198214-SF2359"/>
<dbReference type="GeneID" id="1025539"/>
<dbReference type="KEGG" id="sfl:SF2359"/>
<dbReference type="KEGG" id="sfx:S2494"/>
<dbReference type="PATRIC" id="fig|198214.7.peg.2825"/>
<dbReference type="HOGENOM" id="CLU_000422_11_4_6"/>
<dbReference type="Proteomes" id="UP000001006">
    <property type="component" value="Chromosome"/>
</dbReference>
<dbReference type="Proteomes" id="UP000002673">
    <property type="component" value="Chromosome"/>
</dbReference>
<dbReference type="GO" id="GO:0016020">
    <property type="term" value="C:membrane"/>
    <property type="evidence" value="ECO:0007669"/>
    <property type="project" value="InterPro"/>
</dbReference>
<dbReference type="GO" id="GO:1990204">
    <property type="term" value="C:oxidoreductase complex"/>
    <property type="evidence" value="ECO:0007669"/>
    <property type="project" value="UniProtKB-ARBA"/>
</dbReference>
<dbReference type="GO" id="GO:0051537">
    <property type="term" value="F:2 iron, 2 sulfur cluster binding"/>
    <property type="evidence" value="ECO:0007669"/>
    <property type="project" value="UniProtKB-KW"/>
</dbReference>
<dbReference type="GO" id="GO:0051539">
    <property type="term" value="F:4 iron, 4 sulfur cluster binding"/>
    <property type="evidence" value="ECO:0007669"/>
    <property type="project" value="UniProtKB-KW"/>
</dbReference>
<dbReference type="GO" id="GO:0046872">
    <property type="term" value="F:metal ion binding"/>
    <property type="evidence" value="ECO:0007669"/>
    <property type="project" value="UniProtKB-KW"/>
</dbReference>
<dbReference type="GO" id="GO:0043546">
    <property type="term" value="F:molybdopterin cofactor binding"/>
    <property type="evidence" value="ECO:0007669"/>
    <property type="project" value="InterPro"/>
</dbReference>
<dbReference type="GO" id="GO:0008137">
    <property type="term" value="F:NADH dehydrogenase (ubiquinone) activity"/>
    <property type="evidence" value="ECO:0007669"/>
    <property type="project" value="InterPro"/>
</dbReference>
<dbReference type="GO" id="GO:0048038">
    <property type="term" value="F:quinone binding"/>
    <property type="evidence" value="ECO:0007669"/>
    <property type="project" value="UniProtKB-KW"/>
</dbReference>
<dbReference type="GO" id="GO:0042773">
    <property type="term" value="P:ATP synthesis coupled electron transport"/>
    <property type="evidence" value="ECO:0007669"/>
    <property type="project" value="InterPro"/>
</dbReference>
<dbReference type="CDD" id="cd00207">
    <property type="entry name" value="fer2"/>
    <property type="match status" value="1"/>
</dbReference>
<dbReference type="CDD" id="cd02788">
    <property type="entry name" value="MopB_CT_NDH-1_NuoG2-N7"/>
    <property type="match status" value="1"/>
</dbReference>
<dbReference type="CDD" id="cd02771">
    <property type="entry name" value="MopB_NDH-1_NuoG2-N7"/>
    <property type="match status" value="1"/>
</dbReference>
<dbReference type="FunFam" id="2.40.40.20:FF:000014">
    <property type="entry name" value="NADH-quinone oxidoreductase"/>
    <property type="match status" value="1"/>
</dbReference>
<dbReference type="FunFam" id="3.10.20.740:FF:000002">
    <property type="entry name" value="NADH-quinone oxidoreductase"/>
    <property type="match status" value="1"/>
</dbReference>
<dbReference type="FunFam" id="3.30.200.210:FF:000004">
    <property type="entry name" value="NADH-quinone oxidoreductase"/>
    <property type="match status" value="1"/>
</dbReference>
<dbReference type="FunFam" id="3.40.50.740:FF:000006">
    <property type="entry name" value="NADH-quinone oxidoreductase"/>
    <property type="match status" value="1"/>
</dbReference>
<dbReference type="Gene3D" id="2.40.40.20">
    <property type="match status" value="1"/>
</dbReference>
<dbReference type="Gene3D" id="3.10.20.740">
    <property type="match status" value="1"/>
</dbReference>
<dbReference type="Gene3D" id="3.30.200.210">
    <property type="match status" value="1"/>
</dbReference>
<dbReference type="Gene3D" id="3.40.50.740">
    <property type="match status" value="1"/>
</dbReference>
<dbReference type="InterPro" id="IPR036010">
    <property type="entry name" value="2Fe-2S_ferredoxin-like_sf"/>
</dbReference>
<dbReference type="InterPro" id="IPR001041">
    <property type="entry name" value="2Fe-2S_ferredoxin-type"/>
</dbReference>
<dbReference type="InterPro" id="IPR009010">
    <property type="entry name" value="Asp_de-COase-like_dom_sf"/>
</dbReference>
<dbReference type="InterPro" id="IPR006657">
    <property type="entry name" value="MoPterin_dinucl-bd_dom"/>
</dbReference>
<dbReference type="InterPro" id="IPR006656">
    <property type="entry name" value="Mopterin_OxRdtase"/>
</dbReference>
<dbReference type="InterPro" id="IPR006963">
    <property type="entry name" value="Mopterin_OxRdtase_4Fe-4S_dom"/>
</dbReference>
<dbReference type="InterPro" id="IPR000283">
    <property type="entry name" value="NADH_UbQ_OxRdtase_75kDa_su_CS"/>
</dbReference>
<dbReference type="InterPro" id="IPR054351">
    <property type="entry name" value="NADH_UbQ_OxRdtase_ferredoxin"/>
</dbReference>
<dbReference type="InterPro" id="IPR010228">
    <property type="entry name" value="NADH_UbQ_OxRdtase_Gsu"/>
</dbReference>
<dbReference type="InterPro" id="IPR019574">
    <property type="entry name" value="NADH_UbQ_OxRdtase_Gsu_4Fe4S-bd"/>
</dbReference>
<dbReference type="InterPro" id="IPR050123">
    <property type="entry name" value="Prok_molybdopt-oxidoreductase"/>
</dbReference>
<dbReference type="NCBIfam" id="TIGR01973">
    <property type="entry name" value="NuoG"/>
    <property type="match status" value="1"/>
</dbReference>
<dbReference type="PANTHER" id="PTHR43105:SF10">
    <property type="entry name" value="NADH-QUINONE OXIDOREDUCTASE SUBUNIT G"/>
    <property type="match status" value="1"/>
</dbReference>
<dbReference type="PANTHER" id="PTHR43105">
    <property type="entry name" value="RESPIRATORY NITRATE REDUCTASE"/>
    <property type="match status" value="1"/>
</dbReference>
<dbReference type="Pfam" id="PF13510">
    <property type="entry name" value="Fer2_4"/>
    <property type="match status" value="1"/>
</dbReference>
<dbReference type="Pfam" id="PF22117">
    <property type="entry name" value="Fer4_Nqo3"/>
    <property type="match status" value="1"/>
</dbReference>
<dbReference type="Pfam" id="PF04879">
    <property type="entry name" value="Molybdop_Fe4S4"/>
    <property type="match status" value="1"/>
</dbReference>
<dbReference type="Pfam" id="PF00384">
    <property type="entry name" value="Molybdopterin"/>
    <property type="match status" value="1"/>
</dbReference>
<dbReference type="Pfam" id="PF01568">
    <property type="entry name" value="Molydop_binding"/>
    <property type="match status" value="1"/>
</dbReference>
<dbReference type="Pfam" id="PF10588">
    <property type="entry name" value="NADH-G_4Fe-4S_3"/>
    <property type="match status" value="1"/>
</dbReference>
<dbReference type="SMART" id="SM00926">
    <property type="entry name" value="Molybdop_Fe4S4"/>
    <property type="match status" value="1"/>
</dbReference>
<dbReference type="SMART" id="SM00929">
    <property type="entry name" value="NADH-G_4Fe-4S_3"/>
    <property type="match status" value="1"/>
</dbReference>
<dbReference type="SUPFAM" id="SSF54292">
    <property type="entry name" value="2Fe-2S ferredoxin-like"/>
    <property type="match status" value="1"/>
</dbReference>
<dbReference type="SUPFAM" id="SSF54862">
    <property type="entry name" value="4Fe-4S ferredoxins"/>
    <property type="match status" value="1"/>
</dbReference>
<dbReference type="SUPFAM" id="SSF50692">
    <property type="entry name" value="ADC-like"/>
    <property type="match status" value="1"/>
</dbReference>
<dbReference type="SUPFAM" id="SSF53706">
    <property type="entry name" value="Formate dehydrogenase/DMSO reductase, domains 1-3"/>
    <property type="match status" value="1"/>
</dbReference>
<dbReference type="PROSITE" id="PS51085">
    <property type="entry name" value="2FE2S_FER_2"/>
    <property type="match status" value="1"/>
</dbReference>
<dbReference type="PROSITE" id="PS51839">
    <property type="entry name" value="4FE4S_HC3"/>
    <property type="match status" value="1"/>
</dbReference>
<dbReference type="PROSITE" id="PS51669">
    <property type="entry name" value="4FE4S_MOW_BIS_MGD"/>
    <property type="match status" value="1"/>
</dbReference>
<dbReference type="PROSITE" id="PS00641">
    <property type="entry name" value="COMPLEX1_75K_1"/>
    <property type="match status" value="1"/>
</dbReference>
<dbReference type="PROSITE" id="PS00642">
    <property type="entry name" value="COMPLEX1_75K_2"/>
    <property type="match status" value="1"/>
</dbReference>
<dbReference type="PROSITE" id="PS00643">
    <property type="entry name" value="COMPLEX1_75K_3"/>
    <property type="match status" value="1"/>
</dbReference>
<proteinExistence type="inferred from homology"/>
<accession>Q7UC56</accession>
<accession>Q83QS8</accession>
<comment type="function">
    <text evidence="1">NDH-1 shuttles electrons from NADH, via FMN and iron-sulfur (Fe-S) centers, to quinones in the respiratory chain. The immediate electron acceptor for the enzyme in this species is believed to be ubiquinone. Couples the redox reaction to proton translocation (for every two electrons transferred, four hydrogen ions are translocated across the cytoplasmic membrane), and thus conserves the redox energy in a proton gradient (By similarity).</text>
</comment>
<comment type="catalytic activity">
    <reaction>
        <text>a quinone + NADH + 5 H(+)(in) = a quinol + NAD(+) + 4 H(+)(out)</text>
        <dbReference type="Rhea" id="RHEA:57888"/>
        <dbReference type="ChEBI" id="CHEBI:15378"/>
        <dbReference type="ChEBI" id="CHEBI:24646"/>
        <dbReference type="ChEBI" id="CHEBI:57540"/>
        <dbReference type="ChEBI" id="CHEBI:57945"/>
        <dbReference type="ChEBI" id="CHEBI:132124"/>
    </reaction>
</comment>
<comment type="cofactor">
    <cofactor evidence="1">
        <name>[2Fe-2S] cluster</name>
        <dbReference type="ChEBI" id="CHEBI:190135"/>
    </cofactor>
    <text evidence="1">Binds 1 [2Fe-2S] cluster per subunit.</text>
</comment>
<comment type="cofactor">
    <cofactor evidence="1">
        <name>[4Fe-4S] cluster</name>
        <dbReference type="ChEBI" id="CHEBI:49883"/>
    </cofactor>
    <text evidence="1">Binds 3 [4Fe-4S] clusters per subunit.</text>
</comment>
<comment type="subunit">
    <text>Composed of 13 different subunits. Subunits NuoCD, E, F, and G constitute the peripheral sector of the complex.</text>
</comment>
<comment type="similarity">
    <text evidence="6">Belongs to the complex I 75 kDa subunit family.</text>
</comment>
<organism>
    <name type="scientific">Shigella flexneri</name>
    <dbReference type="NCBI Taxonomy" id="623"/>
    <lineage>
        <taxon>Bacteria</taxon>
        <taxon>Pseudomonadati</taxon>
        <taxon>Pseudomonadota</taxon>
        <taxon>Gammaproteobacteria</taxon>
        <taxon>Enterobacterales</taxon>
        <taxon>Enterobacteriaceae</taxon>
        <taxon>Shigella</taxon>
    </lineage>
</organism>
<name>NUOG_SHIFL</name>
<gene>
    <name type="primary">nuoG</name>
    <name type="ordered locus">SF2359</name>
    <name type="ordered locus">S2494</name>
</gene>
<sequence>MATIHVDGKEYEVNGADNLLEACLSLGLDIPYFCWHPALGSVGACRQCAVKQYQNAEDTRGRLVMSCMTPASDGTFISIDDEEAKQFRESVVEWLMTNHPHDCPVCEEGGNCHLQDMTVMTGHSFRRYRFTKRTHRNQDLGPFISHEMNRCIACYRCVRYYKDYADGTDLGVYGAHDNVYFGRPEDGTLESEFSGNLVEICPTGVFTDKTHSERYNRKWDMQFAPSICQQCSIGCNISPGERYGELRRIENRYNGTVNHYFLCDRGRFGYGYVNLKDRPRQPVQRRGDDFITLNAEQAMQGAADILRQSKKVIGIGSPRASVESNFALRELVGEENFYTGIAHGEQERLQLALKVLREGGIYTPALREIESYDAVLVLGEDVTQTGARVALAVRQAVKGKAREMAAAQKVADWQIAAILNIGQRAKHPLFVTNVDDTRLDDIAAWTYRAPVEDQARLGFAIAHALDNSAPAVDGIEPELQNKIDVIVQALAGAKKPLIISGTNAGSIEVIQAAANVAKALKGRGADVGITMIARSVNSMGLGIMGGGSLEEALTELETGRADAVVVLENDLHRYASATRVNAALAKAPLVMVVDHQRTAIMENAHLVLSSASFAESDGTVINNEGRAQRFFQVYDPAYYDSKTVMLESWRWLHSLHSTLLSREVDWTQLDHVIDAVVAKIPELAGIKDAAPDATFRIRGQKLAREPHRYSGRTAMRANISVHEPRQPQDIDTMFTFSMEGNNQPTAHRSQVPFAWAPGWNSPQAWNKFQDEVGGKLRFGDPGVRLFETSENGLDYFTSVPARFQPQDGKWRIAPYYHLFGSDELSQRAPVFQSRMPQPYIKLNPADAAKLGVNAGTRVSFSYDGNTVTLPVEIAEGLTAGQVGLPMGMSGIAPVLAGAHLEDLKEAQQ</sequence>
<keyword id="KW-0001">2Fe-2S</keyword>
<keyword id="KW-0004">4Fe-4S</keyword>
<keyword id="KW-0408">Iron</keyword>
<keyword id="KW-0411">Iron-sulfur</keyword>
<keyword id="KW-0479">Metal-binding</keyword>
<keyword id="KW-0520">NAD</keyword>
<keyword id="KW-0874">Quinone</keyword>
<keyword id="KW-1185">Reference proteome</keyword>
<keyword id="KW-1278">Translocase</keyword>
<keyword id="KW-0830">Ubiquinone</keyword>
<protein>
    <recommendedName>
        <fullName>NADH-quinone oxidoreductase subunit G</fullName>
        <ecNumber>7.1.1.-</ecNumber>
    </recommendedName>
    <alternativeName>
        <fullName>NADH dehydrogenase I subunit G</fullName>
    </alternativeName>
    <alternativeName>
        <fullName>NDH-1 subunit G</fullName>
    </alternativeName>
</protein>
<evidence type="ECO:0000250" key="1"/>
<evidence type="ECO:0000255" key="2"/>
<evidence type="ECO:0000255" key="3">
    <source>
        <dbReference type="PROSITE-ProRule" id="PRU00465"/>
    </source>
</evidence>
<evidence type="ECO:0000255" key="4">
    <source>
        <dbReference type="PROSITE-ProRule" id="PRU01004"/>
    </source>
</evidence>
<evidence type="ECO:0000255" key="5">
    <source>
        <dbReference type="PROSITE-ProRule" id="PRU01184"/>
    </source>
</evidence>
<evidence type="ECO:0000305" key="6"/>
<reference key="1">
    <citation type="journal article" date="2003" name="Infect. Immun.">
        <title>Complete genome sequence and comparative genomics of Shigella flexneri serotype 2a strain 2457T.</title>
        <authorList>
            <person name="Wei J."/>
            <person name="Goldberg M.B."/>
            <person name="Burland V."/>
            <person name="Venkatesan M.M."/>
            <person name="Deng W."/>
            <person name="Fournier G."/>
            <person name="Mayhew G.F."/>
            <person name="Plunkett G. III"/>
            <person name="Rose D.J."/>
            <person name="Darling A."/>
            <person name="Mau B."/>
            <person name="Perna N.T."/>
            <person name="Payne S.M."/>
            <person name="Runyen-Janecky L.J."/>
            <person name="Zhou S."/>
            <person name="Schwartz D.C."/>
            <person name="Blattner F.R."/>
        </authorList>
    </citation>
    <scope>NUCLEOTIDE SEQUENCE [LARGE SCALE GENOMIC DNA]</scope>
    <source>
        <strain>ATCC 700930 / 2457T / Serotype 2a</strain>
    </source>
</reference>
<reference key="2">
    <citation type="journal article" date="2002" name="Nucleic Acids Res.">
        <title>Genome sequence of Shigella flexneri 2a: insights into pathogenicity through comparison with genomes of Escherichia coli K12 and O157.</title>
        <authorList>
            <person name="Jin Q."/>
            <person name="Yuan Z."/>
            <person name="Xu J."/>
            <person name="Wang Y."/>
            <person name="Shen Y."/>
            <person name="Lu W."/>
            <person name="Wang J."/>
            <person name="Liu H."/>
            <person name="Yang J."/>
            <person name="Yang F."/>
            <person name="Zhang X."/>
            <person name="Zhang J."/>
            <person name="Yang G."/>
            <person name="Wu H."/>
            <person name="Qu D."/>
            <person name="Dong J."/>
            <person name="Sun L."/>
            <person name="Xue Y."/>
            <person name="Zhao A."/>
            <person name="Gao Y."/>
            <person name="Zhu J."/>
            <person name="Kan B."/>
            <person name="Ding K."/>
            <person name="Chen S."/>
            <person name="Cheng H."/>
            <person name="Yao Z."/>
            <person name="He B."/>
            <person name="Chen R."/>
            <person name="Ma D."/>
            <person name="Qiang B."/>
            <person name="Wen Y."/>
            <person name="Hou Y."/>
            <person name="Yu J."/>
        </authorList>
    </citation>
    <scope>NUCLEOTIDE SEQUENCE [LARGE SCALE GENOMIC DNA]</scope>
    <source>
        <strain>301 / Serotype 2a</strain>
    </source>
</reference>
<feature type="initiator methionine" description="Removed" evidence="1">
    <location>
        <position position="1"/>
    </location>
</feature>
<feature type="chain" id="PRO_0000118556" description="NADH-quinone oxidoreductase subunit G">
    <location>
        <begin position="2"/>
        <end position="908"/>
    </location>
</feature>
<feature type="domain" description="2Fe-2S ferredoxin-type" evidence="3">
    <location>
        <begin position="2"/>
        <end position="83"/>
    </location>
</feature>
<feature type="domain" description="4Fe-4S His(Cys)3-ligated-type" evidence="5">
    <location>
        <begin position="83"/>
        <end position="122"/>
    </location>
</feature>
<feature type="domain" description="4Fe-4S Mo/W bis-MGD-type" evidence="4">
    <location>
        <begin position="221"/>
        <end position="277"/>
    </location>
</feature>
<feature type="binding site" evidence="1">
    <location>
        <position position="34"/>
    </location>
    <ligand>
        <name>[2Fe-2S] cluster</name>
        <dbReference type="ChEBI" id="CHEBI:190135"/>
    </ligand>
</feature>
<feature type="binding site" evidence="1">
    <location>
        <position position="45"/>
    </location>
    <ligand>
        <name>[2Fe-2S] cluster</name>
        <dbReference type="ChEBI" id="CHEBI:190135"/>
    </ligand>
</feature>
<feature type="binding site" evidence="1">
    <location>
        <position position="48"/>
    </location>
    <ligand>
        <name>[2Fe-2S] cluster</name>
        <dbReference type="ChEBI" id="CHEBI:190135"/>
    </ligand>
</feature>
<feature type="binding site" evidence="1">
    <location>
        <position position="67"/>
    </location>
    <ligand>
        <name>[2Fe-2S] cluster</name>
        <dbReference type="ChEBI" id="CHEBI:190135"/>
    </ligand>
</feature>
<feature type="binding site" evidence="5">
    <location>
        <position position="99"/>
    </location>
    <ligand>
        <name>[4Fe-4S] cluster</name>
        <dbReference type="ChEBI" id="CHEBI:49883"/>
        <label>1</label>
    </ligand>
</feature>
<feature type="binding site" evidence="5">
    <location>
        <position position="103"/>
    </location>
    <ligand>
        <name>[4Fe-4S] cluster</name>
        <dbReference type="ChEBI" id="CHEBI:49883"/>
        <label>1</label>
    </ligand>
</feature>
<feature type="binding site" evidence="5">
    <location>
        <position position="106"/>
    </location>
    <ligand>
        <name>[4Fe-4S] cluster</name>
        <dbReference type="ChEBI" id="CHEBI:49883"/>
        <label>1</label>
    </ligand>
</feature>
<feature type="binding site" evidence="5">
    <location>
        <position position="112"/>
    </location>
    <ligand>
        <name>[4Fe-4S] cluster</name>
        <dbReference type="ChEBI" id="CHEBI:49883"/>
        <label>1</label>
    </ligand>
</feature>
<feature type="binding site" evidence="1">
    <location>
        <position position="151"/>
    </location>
    <ligand>
        <name>[4Fe-4S] cluster</name>
        <dbReference type="ChEBI" id="CHEBI:49883"/>
        <label>2</label>
    </ligand>
</feature>
<feature type="binding site" evidence="1">
    <location>
        <position position="154"/>
    </location>
    <ligand>
        <name>[4Fe-4S] cluster</name>
        <dbReference type="ChEBI" id="CHEBI:49883"/>
        <label>2</label>
    </ligand>
</feature>
<feature type="binding site" evidence="1">
    <location>
        <position position="157"/>
    </location>
    <ligand>
        <name>[4Fe-4S] cluster</name>
        <dbReference type="ChEBI" id="CHEBI:49883"/>
        <label>2</label>
    </ligand>
</feature>
<feature type="binding site" evidence="1">
    <location>
        <position position="201"/>
    </location>
    <ligand>
        <name>[4Fe-4S] cluster</name>
        <dbReference type="ChEBI" id="CHEBI:49883"/>
        <label>2</label>
    </ligand>
</feature>
<feature type="binding site" evidence="2">
    <location>
        <position position="228"/>
    </location>
    <ligand>
        <name>[4Fe-4S] cluster</name>
        <dbReference type="ChEBI" id="CHEBI:49883"/>
        <label>3</label>
    </ligand>
</feature>
<feature type="binding site" evidence="2">
    <location>
        <position position="231"/>
    </location>
    <ligand>
        <name>[4Fe-4S] cluster</name>
        <dbReference type="ChEBI" id="CHEBI:49883"/>
        <label>3</label>
    </ligand>
</feature>
<feature type="binding site" evidence="2">
    <location>
        <position position="235"/>
    </location>
    <ligand>
        <name>[4Fe-4S] cluster</name>
        <dbReference type="ChEBI" id="CHEBI:49883"/>
        <label>3</label>
    </ligand>
</feature>
<feature type="binding site" evidence="2">
    <location>
        <position position="263"/>
    </location>
    <ligand>
        <name>[4Fe-4S] cluster</name>
        <dbReference type="ChEBI" id="CHEBI:49883"/>
        <label>3</label>
    </ligand>
</feature>